<proteinExistence type="inferred from homology"/>
<keyword id="KW-0028">Amino-acid biosynthesis</keyword>
<keyword id="KW-0963">Cytoplasm</keyword>
<keyword id="KW-0368">Histidine biosynthesis</keyword>
<keyword id="KW-0456">Lyase</keyword>
<reference key="1">
    <citation type="journal article" date="2008" name="J. Bacteriol.">
        <title>The genome sequence of the tomato-pathogenic actinomycete Clavibacter michiganensis subsp. michiganensis NCPPB382 reveals a large island involved in pathogenicity.</title>
        <authorList>
            <person name="Gartemann K.-H."/>
            <person name="Abt B."/>
            <person name="Bekel T."/>
            <person name="Burger A."/>
            <person name="Engemann J."/>
            <person name="Fluegel M."/>
            <person name="Gaigalat L."/>
            <person name="Goesmann A."/>
            <person name="Graefen I."/>
            <person name="Kalinowski J."/>
            <person name="Kaup O."/>
            <person name="Kirchner O."/>
            <person name="Krause L."/>
            <person name="Linke B."/>
            <person name="McHardy A."/>
            <person name="Meyer F."/>
            <person name="Pohle S."/>
            <person name="Rueckert C."/>
            <person name="Schneiker S."/>
            <person name="Zellermann E.-M."/>
            <person name="Puehler A."/>
            <person name="Eichenlaub R."/>
            <person name="Kaiser O."/>
            <person name="Bartels D."/>
        </authorList>
    </citation>
    <scope>NUCLEOTIDE SEQUENCE [LARGE SCALE GENOMIC DNA]</scope>
    <source>
        <strain>NCPPB 382</strain>
    </source>
</reference>
<gene>
    <name evidence="1" type="primary">hisB</name>
    <name type="ordered locus">CMM_2016</name>
</gene>
<evidence type="ECO:0000255" key="1">
    <source>
        <dbReference type="HAMAP-Rule" id="MF_00076"/>
    </source>
</evidence>
<protein>
    <recommendedName>
        <fullName evidence="1">Imidazoleglycerol-phosphate dehydratase</fullName>
        <shortName evidence="1">IGPD</shortName>
        <ecNumber evidence="1">4.2.1.19</ecNumber>
    </recommendedName>
</protein>
<name>HIS7_CLAM3</name>
<accession>A5CSK8</accession>
<dbReference type="EC" id="4.2.1.19" evidence="1"/>
<dbReference type="EMBL" id="AM711867">
    <property type="protein sequence ID" value="CAN02079.1"/>
    <property type="molecule type" value="Genomic_DNA"/>
</dbReference>
<dbReference type="RefSeq" id="WP_012038703.1">
    <property type="nucleotide sequence ID" value="NC_009480.1"/>
</dbReference>
<dbReference type="SMR" id="A5CSK8"/>
<dbReference type="GeneID" id="92948009"/>
<dbReference type="KEGG" id="cmi:CMM_2016"/>
<dbReference type="eggNOG" id="COG0131">
    <property type="taxonomic scope" value="Bacteria"/>
</dbReference>
<dbReference type="HOGENOM" id="CLU_044308_3_0_11"/>
<dbReference type="OrthoDB" id="9790411at2"/>
<dbReference type="UniPathway" id="UPA00031">
    <property type="reaction ID" value="UER00011"/>
</dbReference>
<dbReference type="Proteomes" id="UP000001564">
    <property type="component" value="Chromosome"/>
</dbReference>
<dbReference type="GO" id="GO:0005737">
    <property type="term" value="C:cytoplasm"/>
    <property type="evidence" value="ECO:0007669"/>
    <property type="project" value="UniProtKB-SubCell"/>
</dbReference>
<dbReference type="GO" id="GO:0004424">
    <property type="term" value="F:imidazoleglycerol-phosphate dehydratase activity"/>
    <property type="evidence" value="ECO:0007669"/>
    <property type="project" value="UniProtKB-UniRule"/>
</dbReference>
<dbReference type="GO" id="GO:0000105">
    <property type="term" value="P:L-histidine biosynthetic process"/>
    <property type="evidence" value="ECO:0007669"/>
    <property type="project" value="UniProtKB-UniRule"/>
</dbReference>
<dbReference type="CDD" id="cd07914">
    <property type="entry name" value="IGPD"/>
    <property type="match status" value="1"/>
</dbReference>
<dbReference type="FunFam" id="3.30.230.40:FF:000001">
    <property type="entry name" value="Imidazoleglycerol-phosphate dehydratase HisB"/>
    <property type="match status" value="1"/>
</dbReference>
<dbReference type="FunFam" id="3.30.230.40:FF:000003">
    <property type="entry name" value="Imidazoleglycerol-phosphate dehydratase HisB"/>
    <property type="match status" value="1"/>
</dbReference>
<dbReference type="Gene3D" id="3.30.230.40">
    <property type="entry name" value="Imidazole glycerol phosphate dehydratase, domain 1"/>
    <property type="match status" value="2"/>
</dbReference>
<dbReference type="HAMAP" id="MF_00076">
    <property type="entry name" value="HisB"/>
    <property type="match status" value="1"/>
</dbReference>
<dbReference type="InterPro" id="IPR038494">
    <property type="entry name" value="IGPD_sf"/>
</dbReference>
<dbReference type="InterPro" id="IPR000807">
    <property type="entry name" value="ImidazoleglycerolP_deHydtase"/>
</dbReference>
<dbReference type="InterPro" id="IPR020565">
    <property type="entry name" value="ImidazoleglycerP_deHydtase_CS"/>
</dbReference>
<dbReference type="InterPro" id="IPR020568">
    <property type="entry name" value="Ribosomal_Su5_D2-typ_SF"/>
</dbReference>
<dbReference type="NCBIfam" id="NF002110">
    <property type="entry name" value="PRK00951.1-6"/>
    <property type="match status" value="1"/>
</dbReference>
<dbReference type="NCBIfam" id="NF002111">
    <property type="entry name" value="PRK00951.2-1"/>
    <property type="match status" value="1"/>
</dbReference>
<dbReference type="NCBIfam" id="NF002114">
    <property type="entry name" value="PRK00951.2-4"/>
    <property type="match status" value="1"/>
</dbReference>
<dbReference type="PANTHER" id="PTHR23133:SF2">
    <property type="entry name" value="IMIDAZOLEGLYCEROL-PHOSPHATE DEHYDRATASE"/>
    <property type="match status" value="1"/>
</dbReference>
<dbReference type="PANTHER" id="PTHR23133">
    <property type="entry name" value="IMIDAZOLEGLYCEROL-PHOSPHATE DEHYDRATASE HIS7"/>
    <property type="match status" value="1"/>
</dbReference>
<dbReference type="Pfam" id="PF00475">
    <property type="entry name" value="IGPD"/>
    <property type="match status" value="1"/>
</dbReference>
<dbReference type="SUPFAM" id="SSF54211">
    <property type="entry name" value="Ribosomal protein S5 domain 2-like"/>
    <property type="match status" value="2"/>
</dbReference>
<dbReference type="PROSITE" id="PS00954">
    <property type="entry name" value="IGP_DEHYDRATASE_1"/>
    <property type="match status" value="1"/>
</dbReference>
<dbReference type="PROSITE" id="PS00955">
    <property type="entry name" value="IGP_DEHYDRATASE_2"/>
    <property type="match status" value="1"/>
</dbReference>
<feature type="chain" id="PRO_0000336304" description="Imidazoleglycerol-phosphate dehydratase">
    <location>
        <begin position="1"/>
        <end position="202"/>
    </location>
</feature>
<organism>
    <name type="scientific">Clavibacter michiganensis subsp. michiganensis (strain NCPPB 382)</name>
    <dbReference type="NCBI Taxonomy" id="443906"/>
    <lineage>
        <taxon>Bacteria</taxon>
        <taxon>Bacillati</taxon>
        <taxon>Actinomycetota</taxon>
        <taxon>Actinomycetes</taxon>
        <taxon>Micrococcales</taxon>
        <taxon>Microbacteriaceae</taxon>
        <taxon>Clavibacter</taxon>
    </lineage>
</organism>
<sequence>MSTLARTAHVTRQTSESTIDLQLDLDGTGASEISTSVPFYDHMLTAFAKHSLTDLRVTATGDTHIDVHHTVEDVGIVLGQAIREALGDKSGIARFGDALVPLDEALVQSVVDISGRPFLVHSGEPAGFEMHLIGGHFTGSMVRHVFEAITFHAGLTVHVTVLGGRDPHHIAEAEFKSFARAFRQAKELDPRVSGIPSTKGAL</sequence>
<comment type="catalytic activity">
    <reaction evidence="1">
        <text>D-erythro-1-(imidazol-4-yl)glycerol 3-phosphate = 3-(imidazol-4-yl)-2-oxopropyl phosphate + H2O</text>
        <dbReference type="Rhea" id="RHEA:11040"/>
        <dbReference type="ChEBI" id="CHEBI:15377"/>
        <dbReference type="ChEBI" id="CHEBI:57766"/>
        <dbReference type="ChEBI" id="CHEBI:58278"/>
        <dbReference type="EC" id="4.2.1.19"/>
    </reaction>
</comment>
<comment type="pathway">
    <text evidence="1">Amino-acid biosynthesis; L-histidine biosynthesis; L-histidine from 5-phospho-alpha-D-ribose 1-diphosphate: step 6/9.</text>
</comment>
<comment type="subcellular location">
    <subcellularLocation>
        <location evidence="1">Cytoplasm</location>
    </subcellularLocation>
</comment>
<comment type="similarity">
    <text evidence="1">Belongs to the imidazoleglycerol-phosphate dehydratase family.</text>
</comment>